<proteinExistence type="inferred from homology"/>
<keyword id="KW-0963">Cytoplasm</keyword>
<keyword id="KW-0460">Magnesium</keyword>
<keyword id="KW-0479">Metal-binding</keyword>
<keyword id="KW-0548">Nucleotidyltransferase</keyword>
<keyword id="KW-1185">Reference proteome</keyword>
<keyword id="KW-0694">RNA-binding</keyword>
<keyword id="KW-0808">Transferase</keyword>
<gene>
    <name evidence="1" type="primary">pnp</name>
    <name type="ordered locus">Francci3_3555</name>
</gene>
<accession>Q2J735</accession>
<protein>
    <recommendedName>
        <fullName evidence="1">Polyribonucleotide nucleotidyltransferase</fullName>
        <ecNumber evidence="1">2.7.7.8</ecNumber>
    </recommendedName>
    <alternativeName>
        <fullName evidence="1">Polynucleotide phosphorylase</fullName>
        <shortName evidence="1">PNPase</shortName>
    </alternativeName>
</protein>
<reference key="1">
    <citation type="journal article" date="2007" name="Genome Res.">
        <title>Genome characteristics of facultatively symbiotic Frankia sp. strains reflect host range and host plant biogeography.</title>
        <authorList>
            <person name="Normand P."/>
            <person name="Lapierre P."/>
            <person name="Tisa L.S."/>
            <person name="Gogarten J.P."/>
            <person name="Alloisio N."/>
            <person name="Bagnarol E."/>
            <person name="Bassi C.A."/>
            <person name="Berry A.M."/>
            <person name="Bickhart D.M."/>
            <person name="Choisne N."/>
            <person name="Couloux A."/>
            <person name="Cournoyer B."/>
            <person name="Cruveiller S."/>
            <person name="Daubin V."/>
            <person name="Demange N."/>
            <person name="Francino M.P."/>
            <person name="Goltsman E."/>
            <person name="Huang Y."/>
            <person name="Kopp O.R."/>
            <person name="Labarre L."/>
            <person name="Lapidus A."/>
            <person name="Lavire C."/>
            <person name="Marechal J."/>
            <person name="Martinez M."/>
            <person name="Mastronunzio J.E."/>
            <person name="Mullin B.C."/>
            <person name="Niemann J."/>
            <person name="Pujic P."/>
            <person name="Rawnsley T."/>
            <person name="Rouy Z."/>
            <person name="Schenowitz C."/>
            <person name="Sellstedt A."/>
            <person name="Tavares F."/>
            <person name="Tomkins J.P."/>
            <person name="Vallenet D."/>
            <person name="Valverde C."/>
            <person name="Wall L.G."/>
            <person name="Wang Y."/>
            <person name="Medigue C."/>
            <person name="Benson D.R."/>
        </authorList>
    </citation>
    <scope>NUCLEOTIDE SEQUENCE [LARGE SCALE GENOMIC DNA]</scope>
    <source>
        <strain>DSM 45818 / CECT 9043 / HFP020203 / CcI3</strain>
    </source>
</reference>
<sequence>MDDSTHAAEAVIATPAGDRTVRFETGRLAKQAAGSAVAYLGDTMVLSATTVSKQPKEQLDFFPLTVDVEERMYAAGRIPGSFFRREGRPSEDAILTCRLIDRPLRPSFAKGLRNEIQVVATVLALDPDTLYDVVAINAASASTTLSGLPFTGPIGATRVGFVDGEWIAFPTHAELARATFDMVVAGRVIEDGSDVAIMMVEAEATPGTVELLAHGAPAPTEEVVAAGLEAAKPAIRELCRAQSELAALAAKPAREFPVFIDYHDDVLDALSAAIGDELSAALRIPGKAERENELDRVRQLAAEKVASQFEGREKEIGAAYRALTKKLVRSRIVTESVRIDGRSTTEIRALSAEVDYIPRVHGSALFERGETQILGVTTLAMLRMEQTVDTLNPDRTKRYMHNYNFPPYSTGETGRVGSPKRREIGHGALAERALLPVLPSREEFPYAIRQVSEALGSNGSTSMGSVCASTLSLLNAGVPLKAPVAGIAMGLIHADDSYVTLTDILGAEDAYGDMDFKVAGTRDFVTALQLDTKLDGIPASVLAAALQQARGARLAILDVMAEAIGSPDEMSAHAPRVISVKIPVDKIGEVIGPKGKMINQIQADSGAEITVEDDGTIYIGAVDGPSAESARSAINAIANPQMPEVGERYLGTIVKITNFGAFVSLTPGRDGLLHVSKLKTLSGGKRVEKVEDVLTVGQKLQVEITEIDSRGKISLSPSAEAADAAAAAS</sequence>
<comment type="function">
    <text evidence="1">Involved in mRNA degradation. Catalyzes the phosphorolysis of single-stranded polyribonucleotides processively in the 3'- to 5'-direction.</text>
</comment>
<comment type="catalytic activity">
    <reaction evidence="1">
        <text>RNA(n+1) + phosphate = RNA(n) + a ribonucleoside 5'-diphosphate</text>
        <dbReference type="Rhea" id="RHEA:22096"/>
        <dbReference type="Rhea" id="RHEA-COMP:14527"/>
        <dbReference type="Rhea" id="RHEA-COMP:17342"/>
        <dbReference type="ChEBI" id="CHEBI:43474"/>
        <dbReference type="ChEBI" id="CHEBI:57930"/>
        <dbReference type="ChEBI" id="CHEBI:140395"/>
        <dbReference type="EC" id="2.7.7.8"/>
    </reaction>
</comment>
<comment type="cofactor">
    <cofactor evidence="1">
        <name>Mg(2+)</name>
        <dbReference type="ChEBI" id="CHEBI:18420"/>
    </cofactor>
</comment>
<comment type="subcellular location">
    <subcellularLocation>
        <location evidence="1">Cytoplasm</location>
    </subcellularLocation>
</comment>
<comment type="similarity">
    <text evidence="1">Belongs to the polyribonucleotide nucleotidyltransferase family.</text>
</comment>
<organism>
    <name type="scientific">Frankia casuarinae (strain DSM 45818 / CECT 9043 / HFP020203 / CcI3)</name>
    <dbReference type="NCBI Taxonomy" id="106370"/>
    <lineage>
        <taxon>Bacteria</taxon>
        <taxon>Bacillati</taxon>
        <taxon>Actinomycetota</taxon>
        <taxon>Actinomycetes</taxon>
        <taxon>Frankiales</taxon>
        <taxon>Frankiaceae</taxon>
        <taxon>Frankia</taxon>
    </lineage>
</organism>
<feature type="chain" id="PRO_0000329657" description="Polyribonucleotide nucleotidyltransferase">
    <location>
        <begin position="1"/>
        <end position="729"/>
    </location>
</feature>
<feature type="domain" description="KH" evidence="1">
    <location>
        <begin position="575"/>
        <end position="634"/>
    </location>
</feature>
<feature type="domain" description="S1 motif" evidence="1">
    <location>
        <begin position="646"/>
        <end position="718"/>
    </location>
</feature>
<feature type="binding site" evidence="1">
    <location>
        <position position="509"/>
    </location>
    <ligand>
        <name>Mg(2+)</name>
        <dbReference type="ChEBI" id="CHEBI:18420"/>
    </ligand>
</feature>
<feature type="binding site" evidence="1">
    <location>
        <position position="515"/>
    </location>
    <ligand>
        <name>Mg(2+)</name>
        <dbReference type="ChEBI" id="CHEBI:18420"/>
    </ligand>
</feature>
<name>PNP_FRACC</name>
<dbReference type="EC" id="2.7.7.8" evidence="1"/>
<dbReference type="EMBL" id="CP000249">
    <property type="protein sequence ID" value="ABD12907.1"/>
    <property type="molecule type" value="Genomic_DNA"/>
</dbReference>
<dbReference type="RefSeq" id="WP_011437931.1">
    <property type="nucleotide sequence ID" value="NZ_LRTJ01000034.1"/>
</dbReference>
<dbReference type="SMR" id="Q2J735"/>
<dbReference type="STRING" id="106370.Francci3_3555"/>
<dbReference type="KEGG" id="fra:Francci3_3555"/>
<dbReference type="eggNOG" id="COG1185">
    <property type="taxonomic scope" value="Bacteria"/>
</dbReference>
<dbReference type="HOGENOM" id="CLU_004217_2_2_11"/>
<dbReference type="OrthoDB" id="9804305at2"/>
<dbReference type="PhylomeDB" id="Q2J735"/>
<dbReference type="Proteomes" id="UP000001937">
    <property type="component" value="Chromosome"/>
</dbReference>
<dbReference type="GO" id="GO:0005829">
    <property type="term" value="C:cytosol"/>
    <property type="evidence" value="ECO:0007669"/>
    <property type="project" value="TreeGrafter"/>
</dbReference>
<dbReference type="GO" id="GO:0000175">
    <property type="term" value="F:3'-5'-RNA exonuclease activity"/>
    <property type="evidence" value="ECO:0007669"/>
    <property type="project" value="TreeGrafter"/>
</dbReference>
<dbReference type="GO" id="GO:0000287">
    <property type="term" value="F:magnesium ion binding"/>
    <property type="evidence" value="ECO:0007669"/>
    <property type="project" value="UniProtKB-UniRule"/>
</dbReference>
<dbReference type="GO" id="GO:0004654">
    <property type="term" value="F:polyribonucleotide nucleotidyltransferase activity"/>
    <property type="evidence" value="ECO:0007669"/>
    <property type="project" value="UniProtKB-UniRule"/>
</dbReference>
<dbReference type="GO" id="GO:0003723">
    <property type="term" value="F:RNA binding"/>
    <property type="evidence" value="ECO:0007669"/>
    <property type="project" value="UniProtKB-UniRule"/>
</dbReference>
<dbReference type="GO" id="GO:0006402">
    <property type="term" value="P:mRNA catabolic process"/>
    <property type="evidence" value="ECO:0007669"/>
    <property type="project" value="UniProtKB-UniRule"/>
</dbReference>
<dbReference type="GO" id="GO:0006396">
    <property type="term" value="P:RNA processing"/>
    <property type="evidence" value="ECO:0007669"/>
    <property type="project" value="InterPro"/>
</dbReference>
<dbReference type="CDD" id="cd02393">
    <property type="entry name" value="KH-I_PNPase"/>
    <property type="match status" value="1"/>
</dbReference>
<dbReference type="CDD" id="cd11364">
    <property type="entry name" value="RNase_PH_PNPase_2"/>
    <property type="match status" value="1"/>
</dbReference>
<dbReference type="CDD" id="cd04472">
    <property type="entry name" value="S1_PNPase"/>
    <property type="match status" value="1"/>
</dbReference>
<dbReference type="FunFam" id="2.40.50.140:FF:000069">
    <property type="entry name" value="Polyribonucleotide nucleotidyltransferase"/>
    <property type="match status" value="1"/>
</dbReference>
<dbReference type="FunFam" id="3.30.1370.10:FF:000001">
    <property type="entry name" value="Polyribonucleotide nucleotidyltransferase"/>
    <property type="match status" value="1"/>
</dbReference>
<dbReference type="FunFam" id="3.30.230.70:FF:000001">
    <property type="entry name" value="Polyribonucleotide nucleotidyltransferase"/>
    <property type="match status" value="1"/>
</dbReference>
<dbReference type="FunFam" id="3.30.230.70:FF:000002">
    <property type="entry name" value="Polyribonucleotide nucleotidyltransferase"/>
    <property type="match status" value="1"/>
</dbReference>
<dbReference type="Gene3D" id="3.30.230.70">
    <property type="entry name" value="GHMP Kinase, N-terminal domain"/>
    <property type="match status" value="2"/>
</dbReference>
<dbReference type="Gene3D" id="3.30.1370.10">
    <property type="entry name" value="K Homology domain, type 1"/>
    <property type="match status" value="1"/>
</dbReference>
<dbReference type="Gene3D" id="2.40.50.140">
    <property type="entry name" value="Nucleic acid-binding proteins"/>
    <property type="match status" value="1"/>
</dbReference>
<dbReference type="HAMAP" id="MF_01595">
    <property type="entry name" value="PNPase"/>
    <property type="match status" value="1"/>
</dbReference>
<dbReference type="InterPro" id="IPR001247">
    <property type="entry name" value="ExoRNase_PH_dom1"/>
</dbReference>
<dbReference type="InterPro" id="IPR036345">
    <property type="entry name" value="ExoRNase_PH_dom2_sf"/>
</dbReference>
<dbReference type="InterPro" id="IPR014069">
    <property type="entry name" value="GPSI/PNP"/>
</dbReference>
<dbReference type="InterPro" id="IPR004087">
    <property type="entry name" value="KH_dom"/>
</dbReference>
<dbReference type="InterPro" id="IPR004088">
    <property type="entry name" value="KH_dom_type_1"/>
</dbReference>
<dbReference type="InterPro" id="IPR036612">
    <property type="entry name" value="KH_dom_type_1_sf"/>
</dbReference>
<dbReference type="InterPro" id="IPR012340">
    <property type="entry name" value="NA-bd_OB-fold"/>
</dbReference>
<dbReference type="InterPro" id="IPR012162">
    <property type="entry name" value="PNPase"/>
</dbReference>
<dbReference type="InterPro" id="IPR027408">
    <property type="entry name" value="PNPase/RNase_PH_dom_sf"/>
</dbReference>
<dbReference type="InterPro" id="IPR015848">
    <property type="entry name" value="PNPase_PH_RNA-bd_bac/org-type"/>
</dbReference>
<dbReference type="InterPro" id="IPR036456">
    <property type="entry name" value="PNPase_PH_RNA-bd_sf"/>
</dbReference>
<dbReference type="InterPro" id="IPR020568">
    <property type="entry name" value="Ribosomal_Su5_D2-typ_SF"/>
</dbReference>
<dbReference type="InterPro" id="IPR003029">
    <property type="entry name" value="S1_domain"/>
</dbReference>
<dbReference type="NCBIfam" id="TIGR03591">
    <property type="entry name" value="polynuc_phos"/>
    <property type="match status" value="1"/>
</dbReference>
<dbReference type="NCBIfam" id="TIGR02696">
    <property type="entry name" value="pppGpp_PNP"/>
    <property type="match status" value="1"/>
</dbReference>
<dbReference type="NCBIfam" id="NF008805">
    <property type="entry name" value="PRK11824.1"/>
    <property type="match status" value="1"/>
</dbReference>
<dbReference type="PANTHER" id="PTHR11252">
    <property type="entry name" value="POLYRIBONUCLEOTIDE NUCLEOTIDYLTRANSFERASE"/>
    <property type="match status" value="1"/>
</dbReference>
<dbReference type="PANTHER" id="PTHR11252:SF0">
    <property type="entry name" value="POLYRIBONUCLEOTIDE NUCLEOTIDYLTRANSFERASE 1, MITOCHONDRIAL"/>
    <property type="match status" value="1"/>
</dbReference>
<dbReference type="Pfam" id="PF00013">
    <property type="entry name" value="KH_1"/>
    <property type="match status" value="1"/>
</dbReference>
<dbReference type="Pfam" id="PF03726">
    <property type="entry name" value="PNPase"/>
    <property type="match status" value="1"/>
</dbReference>
<dbReference type="Pfam" id="PF01138">
    <property type="entry name" value="RNase_PH"/>
    <property type="match status" value="2"/>
</dbReference>
<dbReference type="Pfam" id="PF00575">
    <property type="entry name" value="S1"/>
    <property type="match status" value="1"/>
</dbReference>
<dbReference type="PIRSF" id="PIRSF005499">
    <property type="entry name" value="PNPase"/>
    <property type="match status" value="1"/>
</dbReference>
<dbReference type="SMART" id="SM00322">
    <property type="entry name" value="KH"/>
    <property type="match status" value="1"/>
</dbReference>
<dbReference type="SMART" id="SM00316">
    <property type="entry name" value="S1"/>
    <property type="match status" value="1"/>
</dbReference>
<dbReference type="SUPFAM" id="SSF54791">
    <property type="entry name" value="Eukaryotic type KH-domain (KH-domain type I)"/>
    <property type="match status" value="1"/>
</dbReference>
<dbReference type="SUPFAM" id="SSF50249">
    <property type="entry name" value="Nucleic acid-binding proteins"/>
    <property type="match status" value="1"/>
</dbReference>
<dbReference type="SUPFAM" id="SSF46915">
    <property type="entry name" value="Polynucleotide phosphorylase/guanosine pentaphosphate synthase (PNPase/GPSI), domain 3"/>
    <property type="match status" value="1"/>
</dbReference>
<dbReference type="SUPFAM" id="SSF55666">
    <property type="entry name" value="Ribonuclease PH domain 2-like"/>
    <property type="match status" value="2"/>
</dbReference>
<dbReference type="SUPFAM" id="SSF54211">
    <property type="entry name" value="Ribosomal protein S5 domain 2-like"/>
    <property type="match status" value="2"/>
</dbReference>
<dbReference type="PROSITE" id="PS50084">
    <property type="entry name" value="KH_TYPE_1"/>
    <property type="match status" value="1"/>
</dbReference>
<dbReference type="PROSITE" id="PS50126">
    <property type="entry name" value="S1"/>
    <property type="match status" value="1"/>
</dbReference>
<evidence type="ECO:0000255" key="1">
    <source>
        <dbReference type="HAMAP-Rule" id="MF_01595"/>
    </source>
</evidence>